<gene>
    <name evidence="1" type="primary">yciZ</name>
    <name type="ordered locus">EFER_1669</name>
</gene>
<protein>
    <recommendedName>
        <fullName evidence="1">UPF0509 protein YciZ</fullName>
    </recommendedName>
</protein>
<accession>B7LRZ3</accession>
<evidence type="ECO:0000255" key="1">
    <source>
        <dbReference type="HAMAP-Rule" id="MF_01641"/>
    </source>
</evidence>
<name>YCIZ_ESCF3</name>
<proteinExistence type="inferred from homology"/>
<organism>
    <name type="scientific">Escherichia fergusonii (strain ATCC 35469 / DSM 13698 / CCUG 18766 / IAM 14443 / JCM 21226 / LMG 7866 / NBRC 102419 / NCTC 12128 / CDC 0568-73)</name>
    <dbReference type="NCBI Taxonomy" id="585054"/>
    <lineage>
        <taxon>Bacteria</taxon>
        <taxon>Pseudomonadati</taxon>
        <taxon>Pseudomonadota</taxon>
        <taxon>Gammaproteobacteria</taxon>
        <taxon>Enterobacterales</taxon>
        <taxon>Enterobacteriaceae</taxon>
        <taxon>Escherichia</taxon>
    </lineage>
</organism>
<dbReference type="EMBL" id="CU928158">
    <property type="protein sequence ID" value="CAQ89185.1"/>
    <property type="molecule type" value="Genomic_DNA"/>
</dbReference>
<dbReference type="RefSeq" id="WP_000462225.1">
    <property type="nucleotide sequence ID" value="NC_011740.1"/>
</dbReference>
<dbReference type="SMR" id="B7LRZ3"/>
<dbReference type="KEGG" id="efe:EFER_1669"/>
<dbReference type="HOGENOM" id="CLU_180697_1_0_6"/>
<dbReference type="OrthoDB" id="6561755at2"/>
<dbReference type="Proteomes" id="UP000000745">
    <property type="component" value="Chromosome"/>
</dbReference>
<dbReference type="HAMAP" id="MF_01641">
    <property type="entry name" value="UPF0509"/>
    <property type="match status" value="1"/>
</dbReference>
<dbReference type="InterPro" id="IPR020887">
    <property type="entry name" value="UPF0509"/>
</dbReference>
<dbReference type="NCBIfam" id="NF010179">
    <property type="entry name" value="PRK13658.1"/>
    <property type="match status" value="1"/>
</dbReference>
<dbReference type="Pfam" id="PF23675">
    <property type="entry name" value="YciZ"/>
    <property type="match status" value="1"/>
</dbReference>
<reference key="1">
    <citation type="journal article" date="2009" name="PLoS Genet.">
        <title>Organised genome dynamics in the Escherichia coli species results in highly diverse adaptive paths.</title>
        <authorList>
            <person name="Touchon M."/>
            <person name="Hoede C."/>
            <person name="Tenaillon O."/>
            <person name="Barbe V."/>
            <person name="Baeriswyl S."/>
            <person name="Bidet P."/>
            <person name="Bingen E."/>
            <person name="Bonacorsi S."/>
            <person name="Bouchier C."/>
            <person name="Bouvet O."/>
            <person name="Calteau A."/>
            <person name="Chiapello H."/>
            <person name="Clermont O."/>
            <person name="Cruveiller S."/>
            <person name="Danchin A."/>
            <person name="Diard M."/>
            <person name="Dossat C."/>
            <person name="Karoui M.E."/>
            <person name="Frapy E."/>
            <person name="Garry L."/>
            <person name="Ghigo J.M."/>
            <person name="Gilles A.M."/>
            <person name="Johnson J."/>
            <person name="Le Bouguenec C."/>
            <person name="Lescat M."/>
            <person name="Mangenot S."/>
            <person name="Martinez-Jehanne V."/>
            <person name="Matic I."/>
            <person name="Nassif X."/>
            <person name="Oztas S."/>
            <person name="Petit M.A."/>
            <person name="Pichon C."/>
            <person name="Rouy Z."/>
            <person name="Ruf C.S."/>
            <person name="Schneider D."/>
            <person name="Tourret J."/>
            <person name="Vacherie B."/>
            <person name="Vallenet D."/>
            <person name="Medigue C."/>
            <person name="Rocha E.P.C."/>
            <person name="Denamur E."/>
        </authorList>
    </citation>
    <scope>NUCLEOTIDE SEQUENCE [LARGE SCALE GENOMIC DNA]</scope>
    <source>
        <strain>ATCC 35469 / DSM 13698 / BCRC 15582 / CCUG 18766 / IAM 14443 / JCM 21226 / LMG 7866 / NBRC 102419 / NCTC 12128 / CDC 0568-73</strain>
    </source>
</reference>
<feature type="chain" id="PRO_1000186850" description="UPF0509 protein YciZ">
    <location>
        <begin position="1"/>
        <end position="58"/>
    </location>
</feature>
<comment type="similarity">
    <text evidence="1">Belongs to the UPF0509 family.</text>
</comment>
<sequence>MFELDAQRLAERIDTVLDILVAGDTHSAIHNLEILKAELLSKVKDNAQSGTPKSPWEI</sequence>